<name>SOMA_AILME</name>
<gene>
    <name type="primary">GH1</name>
    <name type="synonym">GH</name>
</gene>
<feature type="signal peptide" evidence="1">
    <location>
        <begin position="1"/>
        <end position="26"/>
    </location>
</feature>
<feature type="chain" id="PRO_0000032971" description="Somatotropin">
    <location>
        <begin position="27"/>
        <end position="216"/>
    </location>
</feature>
<feature type="binding site" evidence="1">
    <location>
        <position position="45"/>
    </location>
    <ligand>
        <name>Zn(2+)</name>
        <dbReference type="ChEBI" id="CHEBI:29105"/>
    </ligand>
</feature>
<feature type="binding site" evidence="1">
    <location>
        <position position="198"/>
    </location>
    <ligand>
        <name>Zn(2+)</name>
        <dbReference type="ChEBI" id="CHEBI:29105"/>
    </ligand>
</feature>
<feature type="modified residue" description="Phosphoserine" evidence="2">
    <location>
        <position position="131"/>
    </location>
</feature>
<feature type="disulfide bond" evidence="1">
    <location>
        <begin position="78"/>
        <end position="189"/>
    </location>
</feature>
<feature type="disulfide bond" evidence="1">
    <location>
        <begin position="206"/>
        <end position="214"/>
    </location>
</feature>
<sequence length="216" mass="24383">MAADPQSSVLLAFALLCLPWPQEVGAFPAMPLSSLFANAVLRAQHLHQLAADTYKEFERAYIPEGQRYSIQNAQAAFCFSETIPAPTGKDEAQQRSDVELLRFSLLLIQSWLGPVQFLSRVFTNSLVFGTSDRVYEKLKDLEEGIQALMRELEDGSPRAGQILKPTYDKFDTSLRSDDALLKNYGLLSCFKKDLHKAETYLRVMKCRRFVESSCAF</sequence>
<reference key="1">
    <citation type="journal article" date="2003" name="Comp. Biochem. Physiol.">
        <title>cDNA cloning of growth hormone from giant panda (Ailuropoda melanoleuca) and its expression in Escherichia coli.</title>
        <authorList>
            <person name="Liao M.J."/>
            <person name="Zhu M.Y."/>
            <person name="Zheng X."/>
            <person name="Zhang Z.H."/>
            <person name="Zhang A.J."/>
        </authorList>
    </citation>
    <scope>NUCLEOTIDE SEQUENCE [MRNA]</scope>
    <source>
        <tissue>Pituitary</tissue>
    </source>
</reference>
<protein>
    <recommendedName>
        <fullName>Somatotropin</fullName>
    </recommendedName>
    <alternativeName>
        <fullName>Growth hormone</fullName>
    </alternativeName>
</protein>
<comment type="function">
    <text evidence="1">Plays an important role in growth control. Its major role in stimulating body growth is to stimulate the liver and other tissues to secrete IGF1. It stimulates both the differentiation and proliferation of myoblasts. It also stimulates amino acid uptake and protein synthesis in muscle and other tissues (By similarity).</text>
</comment>
<comment type="subcellular location">
    <subcellularLocation>
        <location>Secreted</location>
    </subcellularLocation>
</comment>
<comment type="similarity">
    <text evidence="3">Belongs to the somatotropin/prolactin family.</text>
</comment>
<organism>
    <name type="scientific">Ailuropoda melanoleuca</name>
    <name type="common">Giant panda</name>
    <dbReference type="NCBI Taxonomy" id="9646"/>
    <lineage>
        <taxon>Eukaryota</taxon>
        <taxon>Metazoa</taxon>
        <taxon>Chordata</taxon>
        <taxon>Craniata</taxon>
        <taxon>Vertebrata</taxon>
        <taxon>Euteleostomi</taxon>
        <taxon>Mammalia</taxon>
        <taxon>Eutheria</taxon>
        <taxon>Laurasiatheria</taxon>
        <taxon>Carnivora</taxon>
        <taxon>Caniformia</taxon>
        <taxon>Ursidae</taxon>
        <taxon>Ailuropoda</taxon>
    </lineage>
</organism>
<proteinExistence type="evidence at transcript level"/>
<keyword id="KW-1015">Disulfide bond</keyword>
<keyword id="KW-0372">Hormone</keyword>
<keyword id="KW-0479">Metal-binding</keyword>
<keyword id="KW-0597">Phosphoprotein</keyword>
<keyword id="KW-1185">Reference proteome</keyword>
<keyword id="KW-0964">Secreted</keyword>
<keyword id="KW-0732">Signal</keyword>
<keyword id="KW-0862">Zinc</keyword>
<dbReference type="EMBL" id="AF540936">
    <property type="protein sequence ID" value="AAN77228.1"/>
    <property type="molecule type" value="mRNA"/>
</dbReference>
<dbReference type="RefSeq" id="NP_001291856.1">
    <property type="nucleotide sequence ID" value="NM_001304927.1"/>
</dbReference>
<dbReference type="SMR" id="Q8HYE5"/>
<dbReference type="FunCoup" id="Q8HYE5">
    <property type="interactions" value="8"/>
</dbReference>
<dbReference type="STRING" id="9646.ENSAMEP00000003203"/>
<dbReference type="GeneID" id="100471532"/>
<dbReference type="KEGG" id="aml:100471532"/>
<dbReference type="CTD" id="2688"/>
<dbReference type="eggNOG" id="ENOG502R5GJ">
    <property type="taxonomic scope" value="Eukaryota"/>
</dbReference>
<dbReference type="InParanoid" id="Q8HYE5"/>
<dbReference type="OrthoDB" id="9925773at2759"/>
<dbReference type="Proteomes" id="UP000008912">
    <property type="component" value="Unassembled WGS sequence"/>
</dbReference>
<dbReference type="GO" id="GO:0005615">
    <property type="term" value="C:extracellular space"/>
    <property type="evidence" value="ECO:0007669"/>
    <property type="project" value="InterPro"/>
</dbReference>
<dbReference type="GO" id="GO:0008083">
    <property type="term" value="F:growth factor activity"/>
    <property type="evidence" value="ECO:0007669"/>
    <property type="project" value="TreeGrafter"/>
</dbReference>
<dbReference type="GO" id="GO:0005131">
    <property type="term" value="F:growth hormone receptor binding"/>
    <property type="evidence" value="ECO:0007669"/>
    <property type="project" value="InterPro"/>
</dbReference>
<dbReference type="GO" id="GO:0005179">
    <property type="term" value="F:hormone activity"/>
    <property type="evidence" value="ECO:0007669"/>
    <property type="project" value="UniProtKB-KW"/>
</dbReference>
<dbReference type="GO" id="GO:0046872">
    <property type="term" value="F:metal ion binding"/>
    <property type="evidence" value="ECO:0007669"/>
    <property type="project" value="UniProtKB-KW"/>
</dbReference>
<dbReference type="GO" id="GO:0048513">
    <property type="term" value="P:animal organ development"/>
    <property type="evidence" value="ECO:0007669"/>
    <property type="project" value="TreeGrafter"/>
</dbReference>
<dbReference type="GO" id="GO:0060396">
    <property type="term" value="P:growth hormone receptor signaling pathway"/>
    <property type="evidence" value="ECO:0007669"/>
    <property type="project" value="TreeGrafter"/>
</dbReference>
<dbReference type="GO" id="GO:0045927">
    <property type="term" value="P:positive regulation of growth"/>
    <property type="evidence" value="ECO:0007669"/>
    <property type="project" value="TreeGrafter"/>
</dbReference>
<dbReference type="GO" id="GO:0046427">
    <property type="term" value="P:positive regulation of receptor signaling pathway via JAK-STAT"/>
    <property type="evidence" value="ECO:0007669"/>
    <property type="project" value="TreeGrafter"/>
</dbReference>
<dbReference type="GO" id="GO:0031667">
    <property type="term" value="P:response to nutrient levels"/>
    <property type="evidence" value="ECO:0007669"/>
    <property type="project" value="TreeGrafter"/>
</dbReference>
<dbReference type="CDD" id="cd10285">
    <property type="entry name" value="somatotropin_like"/>
    <property type="match status" value="1"/>
</dbReference>
<dbReference type="FunFam" id="1.20.1250.10:FF:000002">
    <property type="entry name" value="Growth hormone"/>
    <property type="match status" value="1"/>
</dbReference>
<dbReference type="Gene3D" id="1.20.1250.10">
    <property type="match status" value="1"/>
</dbReference>
<dbReference type="InterPro" id="IPR009079">
    <property type="entry name" value="4_helix_cytokine-like_core"/>
</dbReference>
<dbReference type="InterPro" id="IPR034975">
    <property type="entry name" value="Somatotropin"/>
</dbReference>
<dbReference type="InterPro" id="IPR001400">
    <property type="entry name" value="Somatotropin/Prolactin"/>
</dbReference>
<dbReference type="InterPro" id="IPR018116">
    <property type="entry name" value="Somatotropin_CS"/>
</dbReference>
<dbReference type="PANTHER" id="PTHR11417:SF2">
    <property type="entry name" value="SOMATOTROPIN"/>
    <property type="match status" value="1"/>
</dbReference>
<dbReference type="PANTHER" id="PTHR11417">
    <property type="entry name" value="SOMATOTROPIN,PROLACTIN"/>
    <property type="match status" value="1"/>
</dbReference>
<dbReference type="Pfam" id="PF00103">
    <property type="entry name" value="Hormone_1"/>
    <property type="match status" value="1"/>
</dbReference>
<dbReference type="PRINTS" id="PR00836">
    <property type="entry name" value="SOMATOTROPIN"/>
</dbReference>
<dbReference type="SUPFAM" id="SSF47266">
    <property type="entry name" value="4-helical cytokines"/>
    <property type="match status" value="1"/>
</dbReference>
<dbReference type="PROSITE" id="PS00266">
    <property type="entry name" value="SOMATOTROPIN_1"/>
    <property type="match status" value="1"/>
</dbReference>
<dbReference type="PROSITE" id="PS00338">
    <property type="entry name" value="SOMATOTROPIN_2"/>
    <property type="match status" value="1"/>
</dbReference>
<accession>Q8HYE5</accession>
<evidence type="ECO:0000250" key="1"/>
<evidence type="ECO:0000250" key="2">
    <source>
        <dbReference type="UniProtKB" id="P01241"/>
    </source>
</evidence>
<evidence type="ECO:0000305" key="3"/>